<reference key="1">
    <citation type="journal article" date="2009" name="PLoS Genet.">
        <title>The genome of Nectria haematococca: contribution of supernumerary chromosomes to gene expansion.</title>
        <authorList>
            <person name="Coleman J.J."/>
            <person name="Rounsley S.D."/>
            <person name="Rodriguez-Carres M."/>
            <person name="Kuo A."/>
            <person name="Wasmann C.C."/>
            <person name="Grimwood J."/>
            <person name="Schmutz J."/>
            <person name="Taga M."/>
            <person name="White G.J."/>
            <person name="Zhou S."/>
            <person name="Schwartz D.C."/>
            <person name="Freitag M."/>
            <person name="Ma L.-J."/>
            <person name="Danchin E.G.J."/>
            <person name="Henrissat B."/>
            <person name="Coutinho P.M."/>
            <person name="Nelson D.R."/>
            <person name="Straney D."/>
            <person name="Napoli C.A."/>
            <person name="Barker B.M."/>
            <person name="Gribskov M."/>
            <person name="Rep M."/>
            <person name="Kroken S."/>
            <person name="Molnar I."/>
            <person name="Rensing C."/>
            <person name="Kennell J.C."/>
            <person name="Zamora J."/>
            <person name="Farman M.L."/>
            <person name="Selker E.U."/>
            <person name="Salamov A."/>
            <person name="Shapiro H."/>
            <person name="Pangilinan J."/>
            <person name="Lindquist E."/>
            <person name="Lamers C."/>
            <person name="Grigoriev I.V."/>
            <person name="Geiser D.M."/>
            <person name="Covert S.F."/>
            <person name="Temporini E."/>
            <person name="VanEtten H.D."/>
        </authorList>
    </citation>
    <scope>NUCLEOTIDE SEQUENCE [LARGE SCALE GENOMIC DNA]</scope>
    <source>
        <strain>ATCC MYA-4622 / CBS 123669 / FGSC 9596 / NRRL 45880 / 77-13-4</strain>
    </source>
</reference>
<name>NOP9_FUSV7</name>
<protein>
    <recommendedName>
        <fullName>Nucleolar protein 9</fullName>
    </recommendedName>
    <alternativeName>
        <fullName>Pumilio domain-containing protein NOP9</fullName>
    </alternativeName>
</protein>
<sequence>MPKPRTKRGHGREEKKRKRREEAESYEAHENDSKRQRTTDENGYQDGQEAQENGIGEKEFFGMLADEEQEYFRRADELLELNQFPSDEERDVFLENVWKEAENKELKLASSQSCSRLMERLIQLSTTAQKKRLFEAFAGHFLSLVQHRFASHCCEALFLRSAGVVTKELSGFVGFVLDTKGAGGDAEKPEAAMEHLFLATLDELEGSLSYLITDRFASHTLRVLLLVLSGRPLEDSSSRTLMKSKKKEKISVSGAEAADEANKGLRAVPPSFTMAATKIIQDSTAGMDATSLRVLARHPMGNPTLQLLLELDLTLNKGEQKADAERPTLLFQLLPGAPKSLSDGSSEASEFINGMIYDQIGSRLIETLITHAPGKVFKALNQNIFLPRIEGYVRNDVSSYAAIRVLNRLSKDDLVQAVEQITPTVPQLVTKSRFNVLKTLFERCAARGANDEIKKLNKGLKEGCGKTPADLVTYLCGFKDEEKKKKDVQQLSKNEYAIQSHGAQLLTALLSIPGPVKGVQESLLAVEPTVLVRLATTSMPTVTVLTTALATPSSNPAFHKSIVSSLLPHIHELAVQQFGHNLINAIAEVPSKGKERSVPFHMKEAIMARLGEHEAELRDSWMGRSVWRNWKGDMWKTRRRDWKVWMREVDAHIESTLPQRGRAAEKQQAAQDKPSKKEEPVVEDKMEVDEVVEKPEEEKKKEKKDKKDKKEKREKKEKKDKKEKKEKKKSKPEEAEVVAEDEE</sequence>
<proteinExistence type="inferred from homology"/>
<evidence type="ECO:0000250" key="1"/>
<evidence type="ECO:0000256" key="2">
    <source>
        <dbReference type="SAM" id="MobiDB-lite"/>
    </source>
</evidence>
<evidence type="ECO:0000305" key="3"/>
<dbReference type="EMBL" id="GG698898">
    <property type="protein sequence ID" value="EEU45946.1"/>
    <property type="molecule type" value="Genomic_DNA"/>
</dbReference>
<dbReference type="RefSeq" id="XP_003051659.1">
    <property type="nucleotide sequence ID" value="XM_003051613.1"/>
</dbReference>
<dbReference type="SMR" id="C7YQ16"/>
<dbReference type="FunCoup" id="C7YQ16">
    <property type="interactions" value="911"/>
</dbReference>
<dbReference type="STRING" id="660122.C7YQ16"/>
<dbReference type="EnsemblFungi" id="NechaT92643">
    <property type="protein sequence ID" value="NechaP92643"/>
    <property type="gene ID" value="NechaG92643"/>
</dbReference>
<dbReference type="GeneID" id="9668888"/>
<dbReference type="KEGG" id="nhe:NECHADRAFT_92643"/>
<dbReference type="VEuPathDB" id="FungiDB:NECHADRAFT_92643"/>
<dbReference type="eggNOG" id="KOG2188">
    <property type="taxonomic scope" value="Eukaryota"/>
</dbReference>
<dbReference type="HOGENOM" id="CLU_008720_1_0_1"/>
<dbReference type="InParanoid" id="C7YQ16"/>
<dbReference type="OMA" id="HHLVRNF"/>
<dbReference type="OrthoDB" id="392571at2759"/>
<dbReference type="Proteomes" id="UP000005206">
    <property type="component" value="Unassembled WGS sequence"/>
</dbReference>
<dbReference type="GO" id="GO:0030686">
    <property type="term" value="C:90S preribosome"/>
    <property type="evidence" value="ECO:0007669"/>
    <property type="project" value="TreeGrafter"/>
</dbReference>
<dbReference type="GO" id="GO:0005730">
    <property type="term" value="C:nucleolus"/>
    <property type="evidence" value="ECO:0007669"/>
    <property type="project" value="UniProtKB-SubCell"/>
</dbReference>
<dbReference type="GO" id="GO:0030688">
    <property type="term" value="C:preribosome, small subunit precursor"/>
    <property type="evidence" value="ECO:0007669"/>
    <property type="project" value="TreeGrafter"/>
</dbReference>
<dbReference type="GO" id="GO:0003723">
    <property type="term" value="F:RNA binding"/>
    <property type="evidence" value="ECO:0007669"/>
    <property type="project" value="InterPro"/>
</dbReference>
<dbReference type="GO" id="GO:0000480">
    <property type="term" value="P:endonucleolytic cleavage in 5'-ETS of tricistronic rRNA transcript (SSU-rRNA, 5.8S rRNA, LSU-rRNA)"/>
    <property type="evidence" value="ECO:0007669"/>
    <property type="project" value="TreeGrafter"/>
</dbReference>
<dbReference type="GO" id="GO:0000447">
    <property type="term" value="P:endonucleolytic cleavage in ITS1 to separate SSU-rRNA from 5.8S rRNA and LSU-rRNA from tricistronic rRNA transcript (SSU-rRNA, 5.8S rRNA, LSU-rRNA)"/>
    <property type="evidence" value="ECO:0007669"/>
    <property type="project" value="TreeGrafter"/>
</dbReference>
<dbReference type="GO" id="GO:0000472">
    <property type="term" value="P:endonucleolytic cleavage to generate mature 5'-end of SSU-rRNA from (SSU-rRNA, 5.8S rRNA, LSU-rRNA)"/>
    <property type="evidence" value="ECO:0007669"/>
    <property type="project" value="TreeGrafter"/>
</dbReference>
<dbReference type="GO" id="GO:0000056">
    <property type="term" value="P:ribosomal small subunit export from nucleus"/>
    <property type="evidence" value="ECO:0007669"/>
    <property type="project" value="TreeGrafter"/>
</dbReference>
<dbReference type="Gene3D" id="1.25.10.10">
    <property type="entry name" value="Leucine-rich Repeat Variant"/>
    <property type="match status" value="2"/>
</dbReference>
<dbReference type="InterPro" id="IPR011989">
    <property type="entry name" value="ARM-like"/>
</dbReference>
<dbReference type="InterPro" id="IPR016024">
    <property type="entry name" value="ARM-type_fold"/>
</dbReference>
<dbReference type="InterPro" id="IPR040000">
    <property type="entry name" value="NOP9"/>
</dbReference>
<dbReference type="InterPro" id="IPR001313">
    <property type="entry name" value="Pumilio_RNA-bd_rpt"/>
</dbReference>
<dbReference type="PANTHER" id="PTHR13102">
    <property type="entry name" value="NUCLEOLAR PROTEIN 9"/>
    <property type="match status" value="1"/>
</dbReference>
<dbReference type="PANTHER" id="PTHR13102:SF0">
    <property type="entry name" value="NUCLEOLAR PROTEIN 9"/>
    <property type="match status" value="1"/>
</dbReference>
<dbReference type="Pfam" id="PF22493">
    <property type="entry name" value="PUF_NOP9"/>
    <property type="match status" value="1"/>
</dbReference>
<dbReference type="SMART" id="SM00025">
    <property type="entry name" value="Pumilio"/>
    <property type="match status" value="5"/>
</dbReference>
<dbReference type="SUPFAM" id="SSF48371">
    <property type="entry name" value="ARM repeat"/>
    <property type="match status" value="1"/>
</dbReference>
<accession>C7YQ16</accession>
<feature type="chain" id="PRO_0000407818" description="Nucleolar protein 9">
    <location>
        <begin position="1"/>
        <end position="743"/>
    </location>
</feature>
<feature type="repeat" description="Pumilio 1">
    <location>
        <begin position="100"/>
        <end position="135"/>
    </location>
</feature>
<feature type="repeat" description="Pumilio 2">
    <location>
        <begin position="203"/>
        <end position="243"/>
    </location>
</feature>
<feature type="repeat" description="Pumilio 3">
    <location>
        <begin position="347"/>
        <end position="382"/>
    </location>
</feature>
<feature type="repeat" description="Pumilio 4">
    <location>
        <begin position="565"/>
        <end position="608"/>
    </location>
</feature>
<feature type="region of interest" description="Disordered" evidence="2">
    <location>
        <begin position="1"/>
        <end position="56"/>
    </location>
</feature>
<feature type="region of interest" description="Disordered" evidence="2">
    <location>
        <begin position="656"/>
        <end position="743"/>
    </location>
</feature>
<feature type="compositionally biased region" description="Basic residues" evidence="2">
    <location>
        <begin position="1"/>
        <end position="19"/>
    </location>
</feature>
<feature type="compositionally biased region" description="Basic and acidic residues" evidence="2">
    <location>
        <begin position="20"/>
        <end position="40"/>
    </location>
</feature>
<feature type="compositionally biased region" description="Basic and acidic residues" evidence="2">
    <location>
        <begin position="673"/>
        <end position="685"/>
    </location>
</feature>
<feature type="compositionally biased region" description="Basic and acidic residues" evidence="2">
    <location>
        <begin position="691"/>
        <end position="700"/>
    </location>
</feature>
<feature type="compositionally biased region" description="Basic residues" evidence="2">
    <location>
        <begin position="701"/>
        <end position="730"/>
    </location>
</feature>
<keyword id="KW-0539">Nucleus</keyword>
<keyword id="KW-1185">Reference proteome</keyword>
<keyword id="KW-0677">Repeat</keyword>
<keyword id="KW-0690">Ribosome biogenesis</keyword>
<keyword id="KW-0698">rRNA processing</keyword>
<organism>
    <name type="scientific">Fusarium vanettenii (strain ATCC MYA-4622 / CBS 123669 / FGSC 9596 / NRRL 45880 / 77-13-4)</name>
    <name type="common">Fusarium solani subsp. pisi</name>
    <dbReference type="NCBI Taxonomy" id="660122"/>
    <lineage>
        <taxon>Eukaryota</taxon>
        <taxon>Fungi</taxon>
        <taxon>Dikarya</taxon>
        <taxon>Ascomycota</taxon>
        <taxon>Pezizomycotina</taxon>
        <taxon>Sordariomycetes</taxon>
        <taxon>Hypocreomycetidae</taxon>
        <taxon>Hypocreales</taxon>
        <taxon>Nectriaceae</taxon>
        <taxon>Fusarium</taxon>
        <taxon>Fusarium solani species complex</taxon>
        <taxon>Fusarium vanettenii</taxon>
    </lineage>
</organism>
<gene>
    <name type="primary">NOP9</name>
    <name type="ORF">NECHADRAFT_92643</name>
</gene>
<comment type="function">
    <text evidence="1">RNA-binding nucleolar protein required for pre-rRNA processing. Involved in production of 18S rRNA and assembly of small ribosomal subunit (By similarity).</text>
</comment>
<comment type="subcellular location">
    <subcellularLocation>
        <location evidence="1">Nucleus</location>
        <location evidence="1">Nucleolus</location>
    </subcellularLocation>
</comment>
<comment type="similarity">
    <text evidence="3">Belongs to the NOP9 family.</text>
</comment>